<evidence type="ECO:0000255" key="1"/>
<evidence type="ECO:0000255" key="2">
    <source>
        <dbReference type="PROSITE-ProRule" id="PRU00041"/>
    </source>
</evidence>
<evidence type="ECO:0000256" key="3">
    <source>
        <dbReference type="SAM" id="MobiDB-lite"/>
    </source>
</evidence>
<evidence type="ECO:0000269" key="4">
    <source>
    </source>
</evidence>
<evidence type="ECO:0000303" key="5">
    <source>
    </source>
</evidence>
<evidence type="ECO:0000305" key="6"/>
<evidence type="ECO:0000312" key="7">
    <source>
        <dbReference type="Araport" id="AT4G11610"/>
    </source>
</evidence>
<evidence type="ECO:0000312" key="8">
    <source>
        <dbReference type="EMBL" id="AEE83030.1"/>
    </source>
</evidence>
<name>MCTP7_ARATH</name>
<accession>Q84TJ7</accession>
<accession>Q9T0C8</accession>
<dbReference type="EMBL" id="AL049500">
    <property type="protein sequence ID" value="CAB39932.1"/>
    <property type="status" value="ALT_SEQ"/>
    <property type="molecule type" value="Genomic_DNA"/>
</dbReference>
<dbReference type="EMBL" id="AL161532">
    <property type="protein sequence ID" value="CAB78204.1"/>
    <property type="status" value="ALT_SEQ"/>
    <property type="molecule type" value="Genomic_DNA"/>
</dbReference>
<dbReference type="EMBL" id="CP002687">
    <property type="protein sequence ID" value="AEE83030.1"/>
    <property type="molecule type" value="Genomic_DNA"/>
</dbReference>
<dbReference type="EMBL" id="BT005726">
    <property type="protein sequence ID" value="AAO64141.1"/>
    <property type="molecule type" value="mRNA"/>
</dbReference>
<dbReference type="EMBL" id="BT008593">
    <property type="protein sequence ID" value="AAP40420.1"/>
    <property type="molecule type" value="mRNA"/>
</dbReference>
<dbReference type="EMBL" id="AK228679">
    <property type="protein sequence ID" value="BAF00585.1"/>
    <property type="molecule type" value="mRNA"/>
</dbReference>
<dbReference type="PIR" id="T04208">
    <property type="entry name" value="T04208"/>
</dbReference>
<dbReference type="RefSeq" id="NP_192898.2">
    <property type="nucleotide sequence ID" value="NM_117230.4"/>
</dbReference>
<dbReference type="SMR" id="Q84TJ7"/>
<dbReference type="FunCoup" id="Q84TJ7">
    <property type="interactions" value="267"/>
</dbReference>
<dbReference type="STRING" id="3702.Q84TJ7"/>
<dbReference type="iPTMnet" id="Q84TJ7"/>
<dbReference type="PaxDb" id="3702-AT4G11610.1"/>
<dbReference type="ProteomicsDB" id="183583"/>
<dbReference type="EnsemblPlants" id="AT4G11610.1">
    <property type="protein sequence ID" value="AT4G11610.1"/>
    <property type="gene ID" value="AT4G11610"/>
</dbReference>
<dbReference type="GeneID" id="826766"/>
<dbReference type="Gramene" id="AT4G11610.1">
    <property type="protein sequence ID" value="AT4G11610.1"/>
    <property type="gene ID" value="AT4G11610"/>
</dbReference>
<dbReference type="KEGG" id="ath:AT4G11610"/>
<dbReference type="Araport" id="AT4G11610"/>
<dbReference type="TAIR" id="AT4G11610">
    <property type="gene designation" value="MCTP7"/>
</dbReference>
<dbReference type="eggNOG" id="ENOG502QR9H">
    <property type="taxonomic scope" value="Eukaryota"/>
</dbReference>
<dbReference type="HOGENOM" id="CLU_003762_1_0_1"/>
<dbReference type="InParanoid" id="Q84TJ7"/>
<dbReference type="PRO" id="PR:Q84TJ7"/>
<dbReference type="Proteomes" id="UP000006548">
    <property type="component" value="Chromosome 4"/>
</dbReference>
<dbReference type="ExpressionAtlas" id="Q84TJ7">
    <property type="expression patterns" value="baseline and differential"/>
</dbReference>
<dbReference type="GO" id="GO:0010008">
    <property type="term" value="C:endosome membrane"/>
    <property type="evidence" value="ECO:0007669"/>
    <property type="project" value="UniProtKB-SubCell"/>
</dbReference>
<dbReference type="GO" id="GO:0031982">
    <property type="term" value="C:vesicle"/>
    <property type="evidence" value="ECO:0000314"/>
    <property type="project" value="TAIR"/>
</dbReference>
<dbReference type="GO" id="GO:0016757">
    <property type="term" value="F:glycosyltransferase activity"/>
    <property type="evidence" value="ECO:0007669"/>
    <property type="project" value="UniProtKB-KW"/>
</dbReference>
<dbReference type="GO" id="GO:0046872">
    <property type="term" value="F:metal ion binding"/>
    <property type="evidence" value="ECO:0007669"/>
    <property type="project" value="UniProtKB-KW"/>
</dbReference>
<dbReference type="GO" id="GO:0016491">
    <property type="term" value="F:oxidoreductase activity"/>
    <property type="evidence" value="ECO:0007669"/>
    <property type="project" value="UniProtKB-KW"/>
</dbReference>
<dbReference type="CDD" id="cd04022">
    <property type="entry name" value="C2A_MCTP_PRT_plant"/>
    <property type="match status" value="1"/>
</dbReference>
<dbReference type="CDD" id="cd08378">
    <property type="entry name" value="C2B_MCTP_PRT_plant"/>
    <property type="match status" value="1"/>
</dbReference>
<dbReference type="CDD" id="cd04019">
    <property type="entry name" value="C2C_MCTP_PRT_plant"/>
    <property type="match status" value="1"/>
</dbReference>
<dbReference type="CDD" id="cd08379">
    <property type="entry name" value="C2D_MCTP_PRT_plant"/>
    <property type="match status" value="1"/>
</dbReference>
<dbReference type="FunFam" id="2.60.40.150:FF:000323">
    <property type="entry name" value="C2 calcium/lipid-binding plant phosphoribosyltransferase family protein"/>
    <property type="match status" value="1"/>
</dbReference>
<dbReference type="FunFam" id="2.60.40.150:FF:000090">
    <property type="entry name" value="C2 domain-containing protein"/>
    <property type="match status" value="1"/>
</dbReference>
<dbReference type="FunFam" id="2.60.40.150:FF:000119">
    <property type="entry name" value="C2 domain-containing protein"/>
    <property type="match status" value="1"/>
</dbReference>
<dbReference type="FunFam" id="2.60.40.150:FF:000128">
    <property type="entry name" value="C2 domain-containing protein"/>
    <property type="match status" value="1"/>
</dbReference>
<dbReference type="Gene3D" id="2.60.40.150">
    <property type="entry name" value="C2 domain"/>
    <property type="match status" value="4"/>
</dbReference>
<dbReference type="InterPro" id="IPR000008">
    <property type="entry name" value="C2_dom"/>
</dbReference>
<dbReference type="InterPro" id="IPR035892">
    <property type="entry name" value="C2_domain_sf"/>
</dbReference>
<dbReference type="InterPro" id="IPR047257">
    <property type="entry name" value="C2B_MCTP_PRT_plant"/>
</dbReference>
<dbReference type="InterPro" id="IPR047258">
    <property type="entry name" value="C2C_MCTP_PRT_plant"/>
</dbReference>
<dbReference type="InterPro" id="IPR047255">
    <property type="entry name" value="C2D_MCTP_PRT_plant"/>
</dbReference>
<dbReference type="InterPro" id="IPR013583">
    <property type="entry name" value="MCTP_C"/>
</dbReference>
<dbReference type="InterPro" id="IPR047259">
    <property type="entry name" value="QUIRKY-like"/>
</dbReference>
<dbReference type="PANTHER" id="PTHR31425:SF52">
    <property type="entry name" value="MULTIPLE C2 DOMAIN AND TRANSMEMBRANE REGION PROTEIN 7"/>
    <property type="match status" value="1"/>
</dbReference>
<dbReference type="PANTHER" id="PTHR31425">
    <property type="entry name" value="PHOSPHORIBOSYLANTHRANILATE TRANSFERASE ISOFORM 1"/>
    <property type="match status" value="1"/>
</dbReference>
<dbReference type="Pfam" id="PF00168">
    <property type="entry name" value="C2"/>
    <property type="match status" value="4"/>
</dbReference>
<dbReference type="Pfam" id="PF08372">
    <property type="entry name" value="PRT_C"/>
    <property type="match status" value="1"/>
</dbReference>
<dbReference type="SMART" id="SM00239">
    <property type="entry name" value="C2"/>
    <property type="match status" value="4"/>
</dbReference>
<dbReference type="SUPFAM" id="SSF49562">
    <property type="entry name" value="C2 domain (Calcium/lipid-binding domain, CaLB)"/>
    <property type="match status" value="4"/>
</dbReference>
<dbReference type="PROSITE" id="PS50004">
    <property type="entry name" value="C2"/>
    <property type="match status" value="4"/>
</dbReference>
<feature type="chain" id="PRO_0000457901" description="Multiple C2 domain and transmembrane region protein 7">
    <location>
        <begin position="1"/>
        <end position="1011"/>
    </location>
</feature>
<feature type="transmembrane region" description="Helical" evidence="1">
    <location>
        <begin position="812"/>
        <end position="832"/>
    </location>
</feature>
<feature type="transmembrane region" description="Helical" evidence="1">
    <location>
        <begin position="846"/>
        <end position="866"/>
    </location>
</feature>
<feature type="transmembrane region" description="Helical" evidence="1">
    <location>
        <begin position="954"/>
        <end position="974"/>
    </location>
</feature>
<feature type="domain" description="C2 1" evidence="2">
    <location>
        <begin position="1"/>
        <end position="110"/>
    </location>
</feature>
<feature type="domain" description="C2 2" evidence="2">
    <location>
        <begin position="261"/>
        <end position="381"/>
    </location>
</feature>
<feature type="domain" description="C2 3" evidence="2">
    <location>
        <begin position="421"/>
        <end position="546"/>
    </location>
</feature>
<feature type="domain" description="C2 4" evidence="2">
    <location>
        <begin position="587"/>
        <end position="709"/>
    </location>
</feature>
<feature type="region of interest" description="Disordered" evidence="3">
    <location>
        <begin position="178"/>
        <end position="201"/>
    </location>
</feature>
<feature type="compositionally biased region" description="Polar residues" evidence="3">
    <location>
        <begin position="178"/>
        <end position="195"/>
    </location>
</feature>
<feature type="binding site" evidence="2">
    <location>
        <position position="294"/>
    </location>
    <ligand>
        <name>Ca(2+)</name>
        <dbReference type="ChEBI" id="CHEBI:29108"/>
        <label>1</label>
    </ligand>
</feature>
<feature type="binding site" evidence="2">
    <location>
        <position position="294"/>
    </location>
    <ligand>
        <name>Ca(2+)</name>
        <dbReference type="ChEBI" id="CHEBI:29108"/>
        <label>2</label>
    </ligand>
</feature>
<feature type="binding site" evidence="2">
    <location>
        <position position="300"/>
    </location>
    <ligand>
        <name>Ca(2+)</name>
        <dbReference type="ChEBI" id="CHEBI:29108"/>
        <label>1</label>
    </ligand>
</feature>
<feature type="binding site" evidence="2">
    <location>
        <position position="347"/>
    </location>
    <ligand>
        <name>Ca(2+)</name>
        <dbReference type="ChEBI" id="CHEBI:29108"/>
        <label>1</label>
    </ligand>
</feature>
<feature type="binding site" evidence="2">
    <location>
        <position position="347"/>
    </location>
    <ligand>
        <name>Ca(2+)</name>
        <dbReference type="ChEBI" id="CHEBI:29108"/>
        <label>2</label>
    </ligand>
</feature>
<feature type="binding site" evidence="2">
    <location>
        <position position="349"/>
    </location>
    <ligand>
        <name>Ca(2+)</name>
        <dbReference type="ChEBI" id="CHEBI:29108"/>
        <label>1</label>
    </ligand>
</feature>
<feature type="binding site" evidence="2">
    <location>
        <position position="349"/>
    </location>
    <ligand>
        <name>Ca(2+)</name>
        <dbReference type="ChEBI" id="CHEBI:29108"/>
        <label>2</label>
    </ligand>
</feature>
<feature type="binding site" evidence="2">
    <location>
        <position position="354"/>
    </location>
    <ligand>
        <name>Ca(2+)</name>
        <dbReference type="ChEBI" id="CHEBI:29108"/>
        <label>2</label>
    </ligand>
</feature>
<gene>
    <name evidence="5" type="primary">MCTP7</name>
    <name evidence="7" type="ordered locus">At4g11610</name>
    <name evidence="8" type="ORF">T5C23.40</name>
</gene>
<keyword id="KW-0106">Calcium</keyword>
<keyword id="KW-0967">Endosome</keyword>
<keyword id="KW-0328">Glycosyltransferase</keyword>
<keyword id="KW-0472">Membrane</keyword>
<keyword id="KW-0479">Metal-binding</keyword>
<keyword id="KW-0560">Oxidoreductase</keyword>
<keyword id="KW-1185">Reference proteome</keyword>
<keyword id="KW-0677">Repeat</keyword>
<keyword id="KW-0808">Transferase</keyword>
<keyword id="KW-0812">Transmembrane</keyword>
<keyword id="KW-1133">Transmembrane helix</keyword>
<proteinExistence type="evidence at transcript level"/>
<comment type="function">
    <text evidence="5">May function as a signaling molecule by regulating the trafficking of other regulators.</text>
</comment>
<comment type="cofactor">
    <cofactor evidence="2">
        <name>Ca(2+)</name>
        <dbReference type="ChEBI" id="CHEBI:29108"/>
    </cofactor>
</comment>
<comment type="subcellular location">
    <subcellularLocation>
        <location evidence="1">Membrane</location>
        <topology evidence="1">Multi-pass membrane protein</topology>
    </subcellularLocation>
    <subcellularLocation>
        <location evidence="4">Vesicle</location>
    </subcellularLocation>
    <subcellularLocation>
        <location evidence="4">Endosome membrane</location>
        <topology evidence="1">Multi-pass membrane protein</topology>
    </subcellularLocation>
    <text evidence="4">Localized in small structures within cells.</text>
</comment>
<comment type="tissue specificity">
    <text evidence="4">Accumulates specifically in hydathodes (PubMed:29259105). Restricted the basal meristem of roots (PubMed:29259105). Observed in flowers (PubMed:29259105).</text>
</comment>
<comment type="developmental stage">
    <text evidence="4">In developing flowers, observed in gynoecia of young flowers, but later confined to the distal end of filaments in old flowers.</text>
</comment>
<comment type="similarity">
    <text evidence="6">Belongs to the MCTP family.</text>
</comment>
<comment type="sequence caution" evidence="6">
    <conflict type="erroneous gene model prediction">
        <sequence resource="EMBL-CDS" id="CAB39932"/>
    </conflict>
</comment>
<comment type="sequence caution" evidence="6">
    <conflict type="erroneous gene model prediction">
        <sequence resource="EMBL-CDS" id="CAB78204"/>
    </conflict>
</comment>
<organism>
    <name type="scientific">Arabidopsis thaliana</name>
    <name type="common">Mouse-ear cress</name>
    <dbReference type="NCBI Taxonomy" id="3702"/>
    <lineage>
        <taxon>Eukaryota</taxon>
        <taxon>Viridiplantae</taxon>
        <taxon>Streptophyta</taxon>
        <taxon>Embryophyta</taxon>
        <taxon>Tracheophyta</taxon>
        <taxon>Spermatophyta</taxon>
        <taxon>Magnoliopsida</taxon>
        <taxon>eudicotyledons</taxon>
        <taxon>Gunneridae</taxon>
        <taxon>Pentapetalae</taxon>
        <taxon>rosids</taxon>
        <taxon>malvids</taxon>
        <taxon>Brassicales</taxon>
        <taxon>Brassicaceae</taxon>
        <taxon>Camelineae</taxon>
        <taxon>Arabidopsis</taxon>
    </lineage>
</organism>
<sequence>MMMSNLKLGVDVIGAHNLFPKDGQGTSNAYVELYFDGQKHRTTIKDRDLNPVWNESFFFNISDPSRLHYLNLEAQAYSHNRSTNGRSFLGKVSLSGTSFVPHSDAVVLHFPMERRGIFSRVRGELGLKVYITDEASLKSSAASNDHPDNLDPALPRAMNVEHRSDKRHVFYNLPNSAQEHQHQHPQGPNQSSSLAAEQDNHNEHHHHYVPKHQVDEMRSEPARPSKLVHAHSIASAQPADFALKETSPHLGGGRVVGGRVIHKDKTATSTYDLVERMYFLYVRVVKARELPIMDITGSVDPFVEVRVGNYKGITRHFEKRQHPEWNQVFAFAKERMQASVLEVVVKDKDLLKDDYVGFVRFDINDVPLRVPPDSPLAPQWYRLEDKKGEKIKGELMLAVWIGTQADEAFSDAWHSDAAMPVDCSPAISAVLRSKVYHAPRLWYVRVNVIEAQDLIPTDKTRFPDVYVKAQLGNQVMKTRPCQARTLGAVWNEDFLFVVAEPFEDHLVLTVEDRVAPGKDEIVGRTYIPLNTVEKRADDHMIHARWYNLERPVIVDVDQLKREKFSMRIHLRVCLEGGYHVLDESTHYSSDLRPSARPLWRQPIGVLELGILNAVGLHPMKTREGRGTSDTFCVGKYGQKWVRTRTMVDNLCPKYNEQYTWEVFDPATVLTVGVFDNGQLGEKGNRDVKIGKIRIRLSTLETGRIYTHSYPLLVLHPTGVKKMGELHMAVRFTCISFANMLYQYSKPLLPKMHYVRPFSVMQQDMLRHQAVNIVAARLGRAEPPLRKEIIEFMSDTDSHLWSMRKSKANFFRMMTVFSGVIAVGKWFSDICSWRNPITTVLVHVLFLMLVCLPELILPTMFLYMFLIGLWNYRFRPRYPPHMNTKISQAEAVHPDELDEEFDTFPTTRNPDMVRLRYDRLRSVAGRIQTVIGDLATQGERFQALLSWRDPRATAIFVILCFIAAIVFFITPIQIVVALAGFFTMRHPRFRHRLPSVPVNFFRRLPARTDSML</sequence>
<protein>
    <recommendedName>
        <fullName evidence="6">Multiple C2 domain and transmembrane region protein 7</fullName>
    </recommendedName>
</protein>
<reference key="1">
    <citation type="journal article" date="1999" name="Nature">
        <title>Sequence and analysis of chromosome 4 of the plant Arabidopsis thaliana.</title>
        <authorList>
            <person name="Mayer K.F.X."/>
            <person name="Schueller C."/>
            <person name="Wambutt R."/>
            <person name="Murphy G."/>
            <person name="Volckaert G."/>
            <person name="Pohl T."/>
            <person name="Duesterhoeft A."/>
            <person name="Stiekema W."/>
            <person name="Entian K.-D."/>
            <person name="Terryn N."/>
            <person name="Harris B."/>
            <person name="Ansorge W."/>
            <person name="Brandt P."/>
            <person name="Grivell L.A."/>
            <person name="Rieger M."/>
            <person name="Weichselgartner M."/>
            <person name="de Simone V."/>
            <person name="Obermaier B."/>
            <person name="Mache R."/>
            <person name="Mueller M."/>
            <person name="Kreis M."/>
            <person name="Delseny M."/>
            <person name="Puigdomenech P."/>
            <person name="Watson M."/>
            <person name="Schmidtheini T."/>
            <person name="Reichert B."/>
            <person name="Portetelle D."/>
            <person name="Perez-Alonso M."/>
            <person name="Boutry M."/>
            <person name="Bancroft I."/>
            <person name="Vos P."/>
            <person name="Hoheisel J."/>
            <person name="Zimmermann W."/>
            <person name="Wedler H."/>
            <person name="Ridley P."/>
            <person name="Langham S.-A."/>
            <person name="McCullagh B."/>
            <person name="Bilham L."/>
            <person name="Robben J."/>
            <person name="van der Schueren J."/>
            <person name="Grymonprez B."/>
            <person name="Chuang Y.-J."/>
            <person name="Vandenbussche F."/>
            <person name="Braeken M."/>
            <person name="Weltjens I."/>
            <person name="Voet M."/>
            <person name="Bastiaens I."/>
            <person name="Aert R."/>
            <person name="Defoor E."/>
            <person name="Weitzenegger T."/>
            <person name="Bothe G."/>
            <person name="Ramsperger U."/>
            <person name="Hilbert H."/>
            <person name="Braun M."/>
            <person name="Holzer E."/>
            <person name="Brandt A."/>
            <person name="Peters S."/>
            <person name="van Staveren M."/>
            <person name="Dirkse W."/>
            <person name="Mooijman P."/>
            <person name="Klein Lankhorst R."/>
            <person name="Rose M."/>
            <person name="Hauf J."/>
            <person name="Koetter P."/>
            <person name="Berneiser S."/>
            <person name="Hempel S."/>
            <person name="Feldpausch M."/>
            <person name="Lamberth S."/>
            <person name="Van den Daele H."/>
            <person name="De Keyser A."/>
            <person name="Buysshaert C."/>
            <person name="Gielen J."/>
            <person name="Villarroel R."/>
            <person name="De Clercq R."/>
            <person name="van Montagu M."/>
            <person name="Rogers J."/>
            <person name="Cronin A."/>
            <person name="Quail M.A."/>
            <person name="Bray-Allen S."/>
            <person name="Clark L."/>
            <person name="Doggett J."/>
            <person name="Hall S."/>
            <person name="Kay M."/>
            <person name="Lennard N."/>
            <person name="McLay K."/>
            <person name="Mayes R."/>
            <person name="Pettett A."/>
            <person name="Rajandream M.A."/>
            <person name="Lyne M."/>
            <person name="Benes V."/>
            <person name="Rechmann S."/>
            <person name="Borkova D."/>
            <person name="Bloecker H."/>
            <person name="Scharfe M."/>
            <person name="Grimm M."/>
            <person name="Loehnert T.-H."/>
            <person name="Dose S."/>
            <person name="de Haan M."/>
            <person name="Maarse A.C."/>
            <person name="Schaefer M."/>
            <person name="Mueller-Auer S."/>
            <person name="Gabel C."/>
            <person name="Fuchs M."/>
            <person name="Fartmann B."/>
            <person name="Granderath K."/>
            <person name="Dauner D."/>
            <person name="Herzl A."/>
            <person name="Neumann S."/>
            <person name="Argiriou A."/>
            <person name="Vitale D."/>
            <person name="Liguori R."/>
            <person name="Piravandi E."/>
            <person name="Massenet O."/>
            <person name="Quigley F."/>
            <person name="Clabauld G."/>
            <person name="Muendlein A."/>
            <person name="Felber R."/>
            <person name="Schnabl S."/>
            <person name="Hiller R."/>
            <person name="Schmidt W."/>
            <person name="Lecharny A."/>
            <person name="Aubourg S."/>
            <person name="Chefdor F."/>
            <person name="Cooke R."/>
            <person name="Berger C."/>
            <person name="Monfort A."/>
            <person name="Casacuberta E."/>
            <person name="Gibbons T."/>
            <person name="Weber N."/>
            <person name="Vandenbol M."/>
            <person name="Bargues M."/>
            <person name="Terol J."/>
            <person name="Torres A."/>
            <person name="Perez-Perez A."/>
            <person name="Purnelle B."/>
            <person name="Bent E."/>
            <person name="Johnson S."/>
            <person name="Tacon D."/>
            <person name="Jesse T."/>
            <person name="Heijnen L."/>
            <person name="Schwarz S."/>
            <person name="Scholler P."/>
            <person name="Heber S."/>
            <person name="Francs P."/>
            <person name="Bielke C."/>
            <person name="Frishman D."/>
            <person name="Haase D."/>
            <person name="Lemcke K."/>
            <person name="Mewes H.-W."/>
            <person name="Stocker S."/>
            <person name="Zaccaria P."/>
            <person name="Bevan M."/>
            <person name="Wilson R.K."/>
            <person name="de la Bastide M."/>
            <person name="Habermann K."/>
            <person name="Parnell L."/>
            <person name="Dedhia N."/>
            <person name="Gnoj L."/>
            <person name="Schutz K."/>
            <person name="Huang E."/>
            <person name="Spiegel L."/>
            <person name="Sekhon M."/>
            <person name="Murray J."/>
            <person name="Sheet P."/>
            <person name="Cordes M."/>
            <person name="Abu-Threideh J."/>
            <person name="Stoneking T."/>
            <person name="Kalicki J."/>
            <person name="Graves T."/>
            <person name="Harmon G."/>
            <person name="Edwards J."/>
            <person name="Latreille P."/>
            <person name="Courtney L."/>
            <person name="Cloud J."/>
            <person name="Abbott A."/>
            <person name="Scott K."/>
            <person name="Johnson D."/>
            <person name="Minx P."/>
            <person name="Bentley D."/>
            <person name="Fulton B."/>
            <person name="Miller N."/>
            <person name="Greco T."/>
            <person name="Kemp K."/>
            <person name="Kramer J."/>
            <person name="Fulton L."/>
            <person name="Mardis E."/>
            <person name="Dante M."/>
            <person name="Pepin K."/>
            <person name="Hillier L.W."/>
            <person name="Nelson J."/>
            <person name="Spieth J."/>
            <person name="Ryan E."/>
            <person name="Andrews S."/>
            <person name="Geisel C."/>
            <person name="Layman D."/>
            <person name="Du H."/>
            <person name="Ali J."/>
            <person name="Berghoff A."/>
            <person name="Jones K."/>
            <person name="Drone K."/>
            <person name="Cotton M."/>
            <person name="Joshu C."/>
            <person name="Antonoiu B."/>
            <person name="Zidanic M."/>
            <person name="Strong C."/>
            <person name="Sun H."/>
            <person name="Lamar B."/>
            <person name="Yordan C."/>
            <person name="Ma P."/>
            <person name="Zhong J."/>
            <person name="Preston R."/>
            <person name="Vil D."/>
            <person name="Shekher M."/>
            <person name="Matero A."/>
            <person name="Shah R."/>
            <person name="Swaby I.K."/>
            <person name="O'Shaughnessy A."/>
            <person name="Rodriguez M."/>
            <person name="Hoffman J."/>
            <person name="Till S."/>
            <person name="Granat S."/>
            <person name="Shohdy N."/>
            <person name="Hasegawa A."/>
            <person name="Hameed A."/>
            <person name="Lodhi M."/>
            <person name="Johnson A."/>
            <person name="Chen E."/>
            <person name="Marra M.A."/>
            <person name="Martienssen R."/>
            <person name="McCombie W.R."/>
        </authorList>
    </citation>
    <scope>NUCLEOTIDE SEQUENCE [LARGE SCALE GENOMIC DNA]</scope>
    <source>
        <strain>cv. Columbia</strain>
    </source>
</reference>
<reference key="2">
    <citation type="journal article" date="2017" name="Plant J.">
        <title>Araport11: a complete reannotation of the Arabidopsis thaliana reference genome.</title>
        <authorList>
            <person name="Cheng C.Y."/>
            <person name="Krishnakumar V."/>
            <person name="Chan A.P."/>
            <person name="Thibaud-Nissen F."/>
            <person name="Schobel S."/>
            <person name="Town C.D."/>
        </authorList>
    </citation>
    <scope>GENOME REANNOTATION</scope>
    <source>
        <strain>cv. Columbia</strain>
    </source>
</reference>
<reference key="3">
    <citation type="journal article" date="2003" name="Science">
        <title>Empirical analysis of transcriptional activity in the Arabidopsis genome.</title>
        <authorList>
            <person name="Yamada K."/>
            <person name="Lim J."/>
            <person name="Dale J.M."/>
            <person name="Chen H."/>
            <person name="Shinn P."/>
            <person name="Palm C.J."/>
            <person name="Southwick A.M."/>
            <person name="Wu H.C."/>
            <person name="Kim C.J."/>
            <person name="Nguyen M."/>
            <person name="Pham P.K."/>
            <person name="Cheuk R.F."/>
            <person name="Karlin-Newmann G."/>
            <person name="Liu S.X."/>
            <person name="Lam B."/>
            <person name="Sakano H."/>
            <person name="Wu T."/>
            <person name="Yu G."/>
            <person name="Miranda M."/>
            <person name="Quach H.L."/>
            <person name="Tripp M."/>
            <person name="Chang C.H."/>
            <person name="Lee J.M."/>
            <person name="Toriumi M.J."/>
            <person name="Chan M.M."/>
            <person name="Tang C.C."/>
            <person name="Onodera C.S."/>
            <person name="Deng J.M."/>
            <person name="Akiyama K."/>
            <person name="Ansari Y."/>
            <person name="Arakawa T."/>
            <person name="Banh J."/>
            <person name="Banno F."/>
            <person name="Bowser L."/>
            <person name="Brooks S.Y."/>
            <person name="Carninci P."/>
            <person name="Chao Q."/>
            <person name="Choy N."/>
            <person name="Enju A."/>
            <person name="Goldsmith A.D."/>
            <person name="Gurjal M."/>
            <person name="Hansen N.F."/>
            <person name="Hayashizaki Y."/>
            <person name="Johnson-Hopson C."/>
            <person name="Hsuan V.W."/>
            <person name="Iida K."/>
            <person name="Karnes M."/>
            <person name="Khan S."/>
            <person name="Koesema E."/>
            <person name="Ishida J."/>
            <person name="Jiang P.X."/>
            <person name="Jones T."/>
            <person name="Kawai J."/>
            <person name="Kamiya A."/>
            <person name="Meyers C."/>
            <person name="Nakajima M."/>
            <person name="Narusaka M."/>
            <person name="Seki M."/>
            <person name="Sakurai T."/>
            <person name="Satou M."/>
            <person name="Tamse R."/>
            <person name="Vaysberg M."/>
            <person name="Wallender E.K."/>
            <person name="Wong C."/>
            <person name="Yamamura Y."/>
            <person name="Yuan S."/>
            <person name="Shinozaki K."/>
            <person name="Davis R.W."/>
            <person name="Theologis A."/>
            <person name="Ecker J.R."/>
        </authorList>
    </citation>
    <scope>NUCLEOTIDE SEQUENCE [LARGE SCALE MRNA]</scope>
    <source>
        <strain>cv. Columbia</strain>
    </source>
</reference>
<reference key="4">
    <citation type="submission" date="2006-07" db="EMBL/GenBank/DDBJ databases">
        <title>Large-scale analysis of RIKEN Arabidopsis full-length (RAFL) cDNAs.</title>
        <authorList>
            <person name="Totoki Y."/>
            <person name="Seki M."/>
            <person name="Ishida J."/>
            <person name="Nakajima M."/>
            <person name="Enju A."/>
            <person name="Kamiya A."/>
            <person name="Narusaka M."/>
            <person name="Shin-i T."/>
            <person name="Nakagawa M."/>
            <person name="Sakamoto N."/>
            <person name="Oishi K."/>
            <person name="Kohara Y."/>
            <person name="Kobayashi M."/>
            <person name="Toyoda A."/>
            <person name="Sakaki Y."/>
            <person name="Sakurai T."/>
            <person name="Iida K."/>
            <person name="Akiyama K."/>
            <person name="Satou M."/>
            <person name="Toyoda T."/>
            <person name="Konagaya A."/>
            <person name="Carninci P."/>
            <person name="Kawai J."/>
            <person name="Hayashizaki Y."/>
            <person name="Shinozaki K."/>
        </authorList>
    </citation>
    <scope>NUCLEOTIDE SEQUENCE [LARGE SCALE MRNA]</scope>
    <source>
        <strain>cv. Columbia</strain>
    </source>
</reference>
<reference key="5">
    <citation type="journal article" date="2018" name="Plant Physiol.">
        <title>Characterization of multiple C2 domain and transmembrane region proteins in Arabidopsis.</title>
        <authorList>
            <person name="Liu L."/>
            <person name="Li C."/>
            <person name="Liang Z."/>
            <person name="Yu H."/>
        </authorList>
    </citation>
    <scope>TISSUE SPECIFICITY</scope>
    <scope>DEVELOPMENTAL STAGE</scope>
    <scope>SUBCELLULAR LOCATION</scope>
    <scope>GENE FAMILY</scope>
    <scope>NOMENCLATURE</scope>
    <source>
        <strain>cv. Columbia</strain>
    </source>
</reference>